<reference key="1">
    <citation type="journal article" date="2003" name="Genome Res.">
        <title>Reevaluating human gene annotation: a second-generation analysis of chromosome 22.</title>
        <authorList>
            <person name="Collins J.E."/>
            <person name="Goward M.E."/>
            <person name="Cole C.G."/>
            <person name="Smink L.J."/>
            <person name="Huckle E.J."/>
            <person name="Knowles S."/>
            <person name="Bye J.M."/>
            <person name="Beare D.M."/>
            <person name="Dunham I."/>
        </authorList>
    </citation>
    <scope>NUCLEOTIDE SEQUENCE [LARGE SCALE MRNA]</scope>
</reference>
<reference key="2">
    <citation type="journal article" date="2004" name="Genome Biol.">
        <title>A genome annotation-driven approach to cloning the human ORFeome.</title>
        <authorList>
            <person name="Collins J.E."/>
            <person name="Wright C.L."/>
            <person name="Edwards C.A."/>
            <person name="Davis M.P."/>
            <person name="Grinham J.A."/>
            <person name="Cole C.G."/>
            <person name="Goward M.E."/>
            <person name="Aguado B."/>
            <person name="Mallya M."/>
            <person name="Mokrab Y."/>
            <person name="Huckle E.J."/>
            <person name="Beare D.M."/>
            <person name="Dunham I."/>
        </authorList>
    </citation>
    <scope>NUCLEOTIDE SEQUENCE [LARGE SCALE MRNA]</scope>
</reference>
<reference key="3">
    <citation type="journal article" date="1999" name="Nature">
        <title>The DNA sequence of human chromosome 22.</title>
        <authorList>
            <person name="Dunham I."/>
            <person name="Hunt A.R."/>
            <person name="Collins J.E."/>
            <person name="Bruskiewich R."/>
            <person name="Beare D.M."/>
            <person name="Clamp M."/>
            <person name="Smink L.J."/>
            <person name="Ainscough R."/>
            <person name="Almeida J.P."/>
            <person name="Babbage A.K."/>
            <person name="Bagguley C."/>
            <person name="Bailey J."/>
            <person name="Barlow K.F."/>
            <person name="Bates K.N."/>
            <person name="Beasley O.P."/>
            <person name="Bird C.P."/>
            <person name="Blakey S.E."/>
            <person name="Bridgeman A.M."/>
            <person name="Buck D."/>
            <person name="Burgess J."/>
            <person name="Burrill W.D."/>
            <person name="Burton J."/>
            <person name="Carder C."/>
            <person name="Carter N.P."/>
            <person name="Chen Y."/>
            <person name="Clark G."/>
            <person name="Clegg S.M."/>
            <person name="Cobley V.E."/>
            <person name="Cole C.G."/>
            <person name="Collier R.E."/>
            <person name="Connor R."/>
            <person name="Conroy D."/>
            <person name="Corby N.R."/>
            <person name="Coville G.J."/>
            <person name="Cox A.V."/>
            <person name="Davis J."/>
            <person name="Dawson E."/>
            <person name="Dhami P.D."/>
            <person name="Dockree C."/>
            <person name="Dodsworth S.J."/>
            <person name="Durbin R.M."/>
            <person name="Ellington A.G."/>
            <person name="Evans K.L."/>
            <person name="Fey J.M."/>
            <person name="Fleming K."/>
            <person name="French L."/>
            <person name="Garner A.A."/>
            <person name="Gilbert J.G.R."/>
            <person name="Goward M.E."/>
            <person name="Grafham D.V."/>
            <person name="Griffiths M.N.D."/>
            <person name="Hall C."/>
            <person name="Hall R.E."/>
            <person name="Hall-Tamlyn G."/>
            <person name="Heathcott R.W."/>
            <person name="Ho S."/>
            <person name="Holmes S."/>
            <person name="Hunt S.E."/>
            <person name="Jones M.C."/>
            <person name="Kershaw J."/>
            <person name="Kimberley A.M."/>
            <person name="King A."/>
            <person name="Laird G.K."/>
            <person name="Langford C.F."/>
            <person name="Leversha M.A."/>
            <person name="Lloyd C."/>
            <person name="Lloyd D.M."/>
            <person name="Martyn I.D."/>
            <person name="Mashreghi-Mohammadi M."/>
            <person name="Matthews L.H."/>
            <person name="Mccann O.T."/>
            <person name="Mcclay J."/>
            <person name="Mclaren S."/>
            <person name="McMurray A.A."/>
            <person name="Milne S.A."/>
            <person name="Mortimore B.J."/>
            <person name="Odell C.N."/>
            <person name="Pavitt R."/>
            <person name="Pearce A.V."/>
            <person name="Pearson D."/>
            <person name="Phillimore B.J.C.T."/>
            <person name="Phillips S.H."/>
            <person name="Plumb R.W."/>
            <person name="Ramsay H."/>
            <person name="Ramsey Y."/>
            <person name="Rogers L."/>
            <person name="Ross M.T."/>
            <person name="Scott C.E."/>
            <person name="Sehra H.K."/>
            <person name="Skuce C.D."/>
            <person name="Smalley S."/>
            <person name="Smith M.L."/>
            <person name="Soderlund C."/>
            <person name="Spragon L."/>
            <person name="Steward C.A."/>
            <person name="Sulston J.E."/>
            <person name="Swann R.M."/>
            <person name="Vaudin M."/>
            <person name="Wall M."/>
            <person name="Wallis J.M."/>
            <person name="Whiteley M.N."/>
            <person name="Willey D.L."/>
            <person name="Williams L."/>
            <person name="Williams S.A."/>
            <person name="Williamson H."/>
            <person name="Wilmer T.E."/>
            <person name="Wilming L."/>
            <person name="Wright C.L."/>
            <person name="Hubbard T."/>
            <person name="Bentley D.R."/>
            <person name="Beck S."/>
            <person name="Rogers J."/>
            <person name="Shimizu N."/>
            <person name="Minoshima S."/>
            <person name="Kawasaki K."/>
            <person name="Sasaki T."/>
            <person name="Asakawa S."/>
            <person name="Kudoh J."/>
            <person name="Shintani A."/>
            <person name="Shibuya K."/>
            <person name="Yoshizaki Y."/>
            <person name="Aoki N."/>
            <person name="Mitsuyama S."/>
            <person name="Roe B.A."/>
            <person name="Chen F."/>
            <person name="Chu L."/>
            <person name="Crabtree J."/>
            <person name="Deschamps S."/>
            <person name="Do A."/>
            <person name="Do T."/>
            <person name="Dorman A."/>
            <person name="Fang F."/>
            <person name="Fu Y."/>
            <person name="Hu P."/>
            <person name="Hua A."/>
            <person name="Kenton S."/>
            <person name="Lai H."/>
            <person name="Lao H.I."/>
            <person name="Lewis J."/>
            <person name="Lewis S."/>
            <person name="Lin S.-P."/>
            <person name="Loh P."/>
            <person name="Malaj E."/>
            <person name="Nguyen T."/>
            <person name="Pan H."/>
            <person name="Phan S."/>
            <person name="Qi S."/>
            <person name="Qian Y."/>
            <person name="Ray L."/>
            <person name="Ren Q."/>
            <person name="Shaull S."/>
            <person name="Sloan D."/>
            <person name="Song L."/>
            <person name="Wang Q."/>
            <person name="Wang Y."/>
            <person name="Wang Z."/>
            <person name="White J."/>
            <person name="Willingham D."/>
            <person name="Wu H."/>
            <person name="Yao Z."/>
            <person name="Zhan M."/>
            <person name="Zhang G."/>
            <person name="Chissoe S."/>
            <person name="Murray J."/>
            <person name="Miller N."/>
            <person name="Minx P."/>
            <person name="Fulton R."/>
            <person name="Johnson D."/>
            <person name="Bemis G."/>
            <person name="Bentley D."/>
            <person name="Bradshaw H."/>
            <person name="Bourne S."/>
            <person name="Cordes M."/>
            <person name="Du Z."/>
            <person name="Fulton L."/>
            <person name="Goela D."/>
            <person name="Graves T."/>
            <person name="Hawkins J."/>
            <person name="Hinds K."/>
            <person name="Kemp K."/>
            <person name="Latreille P."/>
            <person name="Layman D."/>
            <person name="Ozersky P."/>
            <person name="Rohlfing T."/>
            <person name="Scheet P."/>
            <person name="Walker C."/>
            <person name="Wamsley A."/>
            <person name="Wohldmann P."/>
            <person name="Pepin K."/>
            <person name="Nelson J."/>
            <person name="Korf I."/>
            <person name="Bedell J.A."/>
            <person name="Hillier L.W."/>
            <person name="Mardis E."/>
            <person name="Waterston R."/>
            <person name="Wilson R."/>
            <person name="Emanuel B.S."/>
            <person name="Shaikh T."/>
            <person name="Kurahashi H."/>
            <person name="Saitta S."/>
            <person name="Budarf M.L."/>
            <person name="McDermid H.E."/>
            <person name="Johnson A."/>
            <person name="Wong A.C.C."/>
            <person name="Morrow B.E."/>
            <person name="Edelmann L."/>
            <person name="Kim U.J."/>
            <person name="Shizuya H."/>
            <person name="Simon M.I."/>
            <person name="Dumanski J.P."/>
            <person name="Peyrard M."/>
            <person name="Kedra D."/>
            <person name="Seroussi E."/>
            <person name="Fransson I."/>
            <person name="Tapia I."/>
            <person name="Bruder C.E."/>
            <person name="O'Brien K.P."/>
            <person name="Wilkinson P."/>
            <person name="Bodenteich A."/>
            <person name="Hartman K."/>
            <person name="Hu X."/>
            <person name="Khan A.S."/>
            <person name="Lane L."/>
            <person name="Tilahun Y."/>
            <person name="Wright H."/>
        </authorList>
    </citation>
    <scope>NUCLEOTIDE SEQUENCE [LARGE SCALE GENOMIC DNA]</scope>
</reference>
<reference key="4">
    <citation type="journal article" date="2004" name="Genome Res.">
        <title>The status, quality, and expansion of the NIH full-length cDNA project: the Mammalian Gene Collection (MGC).</title>
        <authorList>
            <consortium name="The MGC Project Team"/>
        </authorList>
    </citation>
    <scope>NUCLEOTIDE SEQUENCE [LARGE SCALE MRNA]</scope>
    <source>
        <tissue>Lymph</tissue>
    </source>
</reference>
<reference key="5">
    <citation type="journal article" date="2011" name="Mol. Cell. Biochem.">
        <title>Characterizing the novel protein p33MONOX.</title>
        <authorList>
            <person name="Mishra M."/>
            <person name="Inoue N."/>
            <person name="Heese K."/>
        </authorList>
    </citation>
    <scope>INTERACTION WITH KIAA1191</scope>
</reference>
<reference key="6">
    <citation type="journal article" date="2017" name="Nucleic Acids Res.">
        <title>Nol12 is a multifunctional RNA binding protein at the nexus of RNA and DNA metabolism.</title>
        <authorList>
            <person name="Scott D.D."/>
            <person name="Trahan C."/>
            <person name="Zindy P.J."/>
            <person name="Aguilar L.C."/>
            <person name="Delubac M.Y."/>
            <person name="Van Nostrand E.L."/>
            <person name="Adivarahan S."/>
            <person name="Wei K.E."/>
            <person name="Yeo G.W."/>
            <person name="Zenklusen D."/>
            <person name="Oeffinger M."/>
        </authorList>
    </citation>
    <scope>FUNCTION</scope>
    <scope>SUBCELLULAR LOCATION</scope>
    <scope>MUTAGENESIS OF SER-21 AND ASP-23</scope>
</reference>
<reference key="7">
    <citation type="journal article" date="2019" name="Mol. Cell. Biol.">
        <title>NOL12 Repression Induces Nucleolar Stress-Driven Cellular Senescence and Is Associated with Normative Aging.</title>
        <authorList>
            <person name="Pinho M."/>
            <person name="Macedo J.C."/>
            <person name="Logarinho E."/>
            <person name="Pereira P.S."/>
        </authorList>
    </citation>
    <scope>FUNCTION</scope>
    <scope>SUBCELLULAR LOCATION</scope>
</reference>
<name>NOL12_HUMAN</name>
<accession>Q9UGY1</accession>
<gene>
    <name type="primary">NOL12</name>
</gene>
<sequence>MGRNKKKKRDGDDRRPRLVLSFDEEKRREYLTGFHKRKVERKKAAIEEIKQRLKEEQRKLREERHQEYLKMLAEREEALEEADELDRLVTAKTESVQYDHPNHTVTVTTISDLDLSGARLLGLTPPEGGAGDRSEEEASSTEKPTKALPRKSRDPLLSQRISSLTASLHAHSRKKVKRKHPRRAQDSKKPPRAPRTSKAQRRRLTGKARHSGE</sequence>
<keyword id="KW-0175">Coiled coil</keyword>
<keyword id="KW-0963">Cytoplasm</keyword>
<keyword id="KW-0539">Nucleus</keyword>
<keyword id="KW-1267">Proteomics identification</keyword>
<keyword id="KW-1185">Reference proteome</keyword>
<keyword id="KW-0694">RNA-binding</keyword>
<keyword id="KW-0699">rRNA-binding</keyword>
<proteinExistence type="evidence at protein level"/>
<feature type="chain" id="PRO_0000271207" description="Nucleolar protein 12">
    <location>
        <begin position="1"/>
        <end position="213"/>
    </location>
</feature>
<feature type="region of interest" description="Disordered" evidence="2">
    <location>
        <begin position="118"/>
        <end position="213"/>
    </location>
</feature>
<feature type="coiled-coil region" evidence="1">
    <location>
        <begin position="33"/>
        <end position="96"/>
    </location>
</feature>
<feature type="compositionally biased region" description="Basic residues" evidence="2">
    <location>
        <begin position="170"/>
        <end position="182"/>
    </location>
</feature>
<feature type="compositionally biased region" description="Basic residues" evidence="2">
    <location>
        <begin position="198"/>
        <end position="213"/>
    </location>
</feature>
<feature type="mutagenesis site" description="Loss of DNA damage response pathway activation." evidence="4">
    <original>S</original>
    <variation>A</variation>
    <location>
        <position position="21"/>
    </location>
</feature>
<feature type="mutagenesis site" description="Loss of DNA damage response pathway activation." evidence="4">
    <original>D</original>
    <variation>L</variation>
    <location>
        <position position="23"/>
    </location>
</feature>
<dbReference type="EMBL" id="AL160132">
    <property type="protein sequence ID" value="CAB77148.1"/>
    <property type="molecule type" value="mRNA"/>
</dbReference>
<dbReference type="EMBL" id="CR456463">
    <property type="protein sequence ID" value="CAG30349.1"/>
    <property type="molecule type" value="mRNA"/>
</dbReference>
<dbReference type="EMBL" id="Z83844">
    <property type="status" value="NOT_ANNOTATED_CDS"/>
    <property type="molecule type" value="Genomic_DNA"/>
</dbReference>
<dbReference type="EMBL" id="BC002808">
    <property type="protein sequence ID" value="AAH02808.1"/>
    <property type="molecule type" value="mRNA"/>
</dbReference>
<dbReference type="CCDS" id="CCDS13955.1"/>
<dbReference type="RefSeq" id="NP_077289.1">
    <property type="nucleotide sequence ID" value="NM_024313.3"/>
</dbReference>
<dbReference type="SMR" id="Q9UGY1"/>
<dbReference type="BioGRID" id="122577">
    <property type="interactions" value="229"/>
</dbReference>
<dbReference type="FunCoup" id="Q9UGY1">
    <property type="interactions" value="632"/>
</dbReference>
<dbReference type="IntAct" id="Q9UGY1">
    <property type="interactions" value="113"/>
</dbReference>
<dbReference type="MINT" id="Q9UGY1"/>
<dbReference type="STRING" id="9606.ENSP00000352021"/>
<dbReference type="GlyGen" id="Q9UGY1">
    <property type="glycosylation" value="1 site, 1 O-linked glycan (1 site)"/>
</dbReference>
<dbReference type="iPTMnet" id="Q9UGY1"/>
<dbReference type="PhosphoSitePlus" id="Q9UGY1"/>
<dbReference type="BioMuta" id="NOL12"/>
<dbReference type="DMDM" id="74761951"/>
<dbReference type="jPOST" id="Q9UGY1"/>
<dbReference type="MassIVE" id="Q9UGY1"/>
<dbReference type="PaxDb" id="9606-ENSP00000352021"/>
<dbReference type="PeptideAtlas" id="Q9UGY1"/>
<dbReference type="ProteomicsDB" id="84270"/>
<dbReference type="Pumba" id="Q9UGY1"/>
<dbReference type="Antibodypedia" id="73215">
    <property type="antibodies" value="71 antibodies from 21 providers"/>
</dbReference>
<dbReference type="DNASU" id="79159"/>
<dbReference type="Ensembl" id="ENST00000359114.9">
    <property type="protein sequence ID" value="ENSP00000352021.4"/>
    <property type="gene ID" value="ENSG00000273899.5"/>
</dbReference>
<dbReference type="Ensembl" id="ENST00000438329.5">
    <property type="protein sequence ID" value="ENSP00000403059.1"/>
    <property type="gene ID" value="ENSG00000273899.5"/>
</dbReference>
<dbReference type="Ensembl" id="ENST00000611699.1">
    <property type="protein sequence ID" value="ENSP00000482349.1"/>
    <property type="gene ID" value="ENSG00000273899.5"/>
</dbReference>
<dbReference type="GeneID" id="79159"/>
<dbReference type="KEGG" id="hsa:79159"/>
<dbReference type="MANE-Select" id="ENST00000359114.9">
    <property type="protein sequence ID" value="ENSP00000352021.4"/>
    <property type="RefSeq nucleotide sequence ID" value="NM_024313.3"/>
    <property type="RefSeq protein sequence ID" value="NP_077289.1"/>
</dbReference>
<dbReference type="UCSC" id="uc003ato.2">
    <property type="organism name" value="human"/>
</dbReference>
<dbReference type="AGR" id="HGNC:28585"/>
<dbReference type="CTD" id="79159"/>
<dbReference type="DisGeNET" id="79159"/>
<dbReference type="GeneCards" id="NOL12"/>
<dbReference type="HGNC" id="HGNC:28585">
    <property type="gene designation" value="NOL12"/>
</dbReference>
<dbReference type="HPA" id="ENSG00000273899">
    <property type="expression patterns" value="Low tissue specificity"/>
</dbReference>
<dbReference type="neXtProt" id="NX_Q9UGY1"/>
<dbReference type="OpenTargets" id="ENSG00000273899"/>
<dbReference type="PharmGKB" id="PA145148362"/>
<dbReference type="VEuPathDB" id="HostDB:ENSG00000273899"/>
<dbReference type="eggNOG" id="KOG4709">
    <property type="taxonomic scope" value="Eukaryota"/>
</dbReference>
<dbReference type="GeneTree" id="ENSGT00390000015973"/>
<dbReference type="HOGENOM" id="CLU_111183_0_0_1"/>
<dbReference type="InParanoid" id="Q9UGY1"/>
<dbReference type="OMA" id="LHMHSRK"/>
<dbReference type="OrthoDB" id="551633at2759"/>
<dbReference type="PAN-GO" id="Q9UGY1">
    <property type="GO annotations" value="2 GO annotations based on evolutionary models"/>
</dbReference>
<dbReference type="PhylomeDB" id="Q9UGY1"/>
<dbReference type="TreeFam" id="TF323855"/>
<dbReference type="PathwayCommons" id="Q9UGY1"/>
<dbReference type="Reactome" id="R-HSA-6791226">
    <property type="pathway name" value="Major pathway of rRNA processing in the nucleolus and cytosol"/>
</dbReference>
<dbReference type="SignaLink" id="Q9UGY1"/>
<dbReference type="BioGRID-ORCS" id="79159">
    <property type="hits" value="681 hits in 1164 CRISPR screens"/>
</dbReference>
<dbReference type="CD-CODE" id="91857CE7">
    <property type="entry name" value="Nucleolus"/>
</dbReference>
<dbReference type="ChiTaRS" id="NOL12">
    <property type="organism name" value="human"/>
</dbReference>
<dbReference type="GeneWiki" id="NOL12"/>
<dbReference type="GenomeRNAi" id="79159"/>
<dbReference type="Pharos" id="Q9UGY1">
    <property type="development level" value="Tbio"/>
</dbReference>
<dbReference type="PRO" id="PR:Q9UGY1"/>
<dbReference type="Proteomes" id="UP000005640">
    <property type="component" value="Chromosome 22"/>
</dbReference>
<dbReference type="RNAct" id="Q9UGY1">
    <property type="molecule type" value="protein"/>
</dbReference>
<dbReference type="Bgee" id="ENSG00000273899">
    <property type="expression patterns" value="Expressed in sural nerve and 119 other cell types or tissues"/>
</dbReference>
<dbReference type="ExpressionAtlas" id="Q9UGY1">
    <property type="expression patterns" value="baseline and differential"/>
</dbReference>
<dbReference type="GO" id="GO:0005737">
    <property type="term" value="C:cytoplasm"/>
    <property type="evidence" value="ECO:0007669"/>
    <property type="project" value="UniProtKB-SubCell"/>
</dbReference>
<dbReference type="GO" id="GO:0005730">
    <property type="term" value="C:nucleolus"/>
    <property type="evidence" value="ECO:0000318"/>
    <property type="project" value="GO_Central"/>
</dbReference>
<dbReference type="GO" id="GO:0042802">
    <property type="term" value="F:identical protein binding"/>
    <property type="evidence" value="ECO:0000353"/>
    <property type="project" value="IntAct"/>
</dbReference>
<dbReference type="GO" id="GO:0003723">
    <property type="term" value="F:RNA binding"/>
    <property type="evidence" value="ECO:0007005"/>
    <property type="project" value="UniProtKB"/>
</dbReference>
<dbReference type="GO" id="GO:0019843">
    <property type="term" value="F:rRNA binding"/>
    <property type="evidence" value="ECO:0000318"/>
    <property type="project" value="GO_Central"/>
</dbReference>
<dbReference type="GO" id="GO:0003697">
    <property type="term" value="F:single-stranded DNA binding"/>
    <property type="evidence" value="ECO:0007669"/>
    <property type="project" value="Ensembl"/>
</dbReference>
<dbReference type="InterPro" id="IPR019186">
    <property type="entry name" value="Nucleolar_protein_12"/>
</dbReference>
<dbReference type="PANTHER" id="PTHR14577">
    <property type="entry name" value="NUCLEOLAR PROTEIN 12"/>
    <property type="match status" value="1"/>
</dbReference>
<dbReference type="PANTHER" id="PTHR14577:SF0">
    <property type="entry name" value="NUCLEOLAR PROTEIN 12"/>
    <property type="match status" value="1"/>
</dbReference>
<dbReference type="Pfam" id="PF09805">
    <property type="entry name" value="Nop25"/>
    <property type="match status" value="1"/>
</dbReference>
<protein>
    <recommendedName>
        <fullName>Nucleolar protein 12</fullName>
    </recommendedName>
</protein>
<evidence type="ECO:0000255" key="1"/>
<evidence type="ECO:0000256" key="2">
    <source>
        <dbReference type="SAM" id="MobiDB-lite"/>
    </source>
</evidence>
<evidence type="ECO:0000269" key="3">
    <source>
    </source>
</evidence>
<evidence type="ECO:0000269" key="4">
    <source>
    </source>
</evidence>
<evidence type="ECO:0000269" key="5">
    <source>
    </source>
</evidence>
<evidence type="ECO:0000305" key="6"/>
<comment type="function">
    <text evidence="4 5">Multifunctional RNA binding protein that plays a role in RNA metabolism and DNA maintenance. Participates in the resolution of DNA stress and the maintenance of genome integrity by localizing to sites of DNA insults (PubMed:29069457). Also plays a role in proper nucleolar organization by limiting nucleolar size and regulating nucleolar number. Mechanistically, regulates the nucleolar levels of fibrillarin and nucleolin, two key players in pre-rRNA processing and ribosome assembly (PubMed:30988155).</text>
</comment>
<comment type="subunit">
    <text evidence="3">Interacts with KIAA1191.</text>
</comment>
<comment type="interaction">
    <interactant intactId="EBI-716098">
        <id>Q9UGY1</id>
    </interactant>
    <interactant intactId="EBI-10181188">
        <id>Q8N7W2-2</id>
        <label>BEND7</label>
    </interactant>
    <organismsDiffer>false</organismsDiffer>
    <experiments>3</experiments>
</comment>
<comment type="interaction">
    <interactant intactId="EBI-716098">
        <id>Q9UGY1</id>
    </interactant>
    <interactant intactId="EBI-5278764">
        <id>Q96GN5</id>
        <label>CDCA7L</label>
    </interactant>
    <organismsDiffer>false</organismsDiffer>
    <experiments>3</experiments>
</comment>
<comment type="interaction">
    <interactant intactId="EBI-716098">
        <id>Q9UGY1</id>
    </interactant>
    <interactant intactId="EBI-739624">
        <id>Q8NHQ1</id>
        <label>CEP70</label>
    </interactant>
    <organismsDiffer>false</organismsDiffer>
    <experiments>4</experiments>
</comment>
<comment type="interaction">
    <interactant intactId="EBI-716098">
        <id>Q9UGY1</id>
    </interactant>
    <interactant intactId="EBI-739789">
        <id>Q92997</id>
        <label>DVL3</label>
    </interactant>
    <organismsDiffer>false</organismsDiffer>
    <experiments>3</experiments>
</comment>
<comment type="interaction">
    <interactant intactId="EBI-716098">
        <id>Q9UGY1</id>
    </interactant>
    <interactant intactId="EBI-12012928">
        <id>P60371</id>
        <label>KRTAP10-6</label>
    </interactant>
    <organismsDiffer>false</organismsDiffer>
    <experiments>3</experiments>
</comment>
<comment type="interaction">
    <interactant intactId="EBI-716098">
        <id>Q9UGY1</id>
    </interactant>
    <interactant intactId="EBI-10172290">
        <id>P60409</id>
        <label>KRTAP10-7</label>
    </interactant>
    <organismsDiffer>false</organismsDiffer>
    <experiments>3</experiments>
</comment>
<comment type="interaction">
    <interactant intactId="EBI-716098">
        <id>Q9UGY1</id>
    </interactant>
    <interactant intactId="EBI-307531">
        <id>P23508</id>
        <label>MCC</label>
    </interactant>
    <organismsDiffer>false</organismsDiffer>
    <experiments>3</experiments>
</comment>
<comment type="interaction">
    <interactant intactId="EBI-716098">
        <id>Q9UGY1</id>
    </interactant>
    <interactant intactId="EBI-716098">
        <id>Q9UGY1</id>
        <label>NOL12</label>
    </interactant>
    <organismsDiffer>false</organismsDiffer>
    <experiments>3</experiments>
</comment>
<comment type="interaction">
    <interactant intactId="EBI-716098">
        <id>Q9UGY1</id>
    </interactant>
    <interactant intactId="EBI-12023934">
        <id>Q5MJ10</id>
        <label>SPANXN2</label>
    </interactant>
    <organismsDiffer>false</organismsDiffer>
    <experiments>3</experiments>
</comment>
<comment type="interaction">
    <interactant intactId="EBI-716098">
        <id>Q9UGY1</id>
    </interactant>
    <interactant intactId="EBI-2212028">
        <id>Q9Y2D8</id>
        <label>SSX2IP</label>
    </interactant>
    <organismsDiffer>false</organismsDiffer>
    <experiments>3</experiments>
</comment>
<comment type="interaction">
    <interactant intactId="EBI-716098">
        <id>Q9UGY1</id>
    </interactant>
    <interactant intactId="EBI-710997">
        <id>P54274</id>
        <label>TERF1</label>
    </interactant>
    <organismsDiffer>false</organismsDiffer>
    <experiments>2</experiments>
</comment>
<comment type="interaction">
    <interactant intactId="EBI-716098">
        <id>Q9UGY1</id>
    </interactant>
    <interactant intactId="EBI-947459">
        <id>Q9H2G4</id>
        <label>TSPYL2</label>
    </interactant>
    <organismsDiffer>false</organismsDiffer>
    <experiments>3</experiments>
</comment>
<comment type="subcellular location">
    <subcellularLocation>
        <location evidence="4 5">Nucleus</location>
        <location evidence="4 5">Nucleolus</location>
    </subcellularLocation>
    <subcellularLocation>
        <location evidence="4">Nucleus</location>
    </subcellularLocation>
    <subcellularLocation>
        <location evidence="4">Cytoplasm</location>
    </subcellularLocation>
</comment>
<comment type="similarity">
    <text evidence="6">Belongs to the RRP17 family.</text>
</comment>
<organism>
    <name type="scientific">Homo sapiens</name>
    <name type="common">Human</name>
    <dbReference type="NCBI Taxonomy" id="9606"/>
    <lineage>
        <taxon>Eukaryota</taxon>
        <taxon>Metazoa</taxon>
        <taxon>Chordata</taxon>
        <taxon>Craniata</taxon>
        <taxon>Vertebrata</taxon>
        <taxon>Euteleostomi</taxon>
        <taxon>Mammalia</taxon>
        <taxon>Eutheria</taxon>
        <taxon>Euarchontoglires</taxon>
        <taxon>Primates</taxon>
        <taxon>Haplorrhini</taxon>
        <taxon>Catarrhini</taxon>
        <taxon>Hominidae</taxon>
        <taxon>Homo</taxon>
    </lineage>
</organism>